<comment type="function">
    <text evidence="1">Nucleotidase that shows phosphatase activity on nucleoside 5'-monophosphates.</text>
</comment>
<comment type="catalytic activity">
    <reaction evidence="1">
        <text>a ribonucleoside 5'-phosphate + H2O = a ribonucleoside + phosphate</text>
        <dbReference type="Rhea" id="RHEA:12484"/>
        <dbReference type="ChEBI" id="CHEBI:15377"/>
        <dbReference type="ChEBI" id="CHEBI:18254"/>
        <dbReference type="ChEBI" id="CHEBI:43474"/>
        <dbReference type="ChEBI" id="CHEBI:58043"/>
        <dbReference type="EC" id="3.1.3.5"/>
    </reaction>
</comment>
<comment type="cofactor">
    <cofactor evidence="1">
        <name>a divalent metal cation</name>
        <dbReference type="ChEBI" id="CHEBI:60240"/>
    </cofactor>
    <text evidence="1">Binds 1 divalent metal cation per subunit.</text>
</comment>
<comment type="subcellular location">
    <subcellularLocation>
        <location evidence="1">Cytoplasm</location>
    </subcellularLocation>
</comment>
<comment type="similarity">
    <text evidence="1">Belongs to the SurE nucleotidase family.</text>
</comment>
<dbReference type="EC" id="3.1.3.5" evidence="1"/>
<dbReference type="EMBL" id="CP001391">
    <property type="protein sequence ID" value="ACN95809.1"/>
    <property type="molecule type" value="Genomic_DNA"/>
</dbReference>
<dbReference type="RefSeq" id="WP_007550279.1">
    <property type="nucleotide sequence ID" value="NZ_MKIF01000086.1"/>
</dbReference>
<dbReference type="SMR" id="C0R4G7"/>
<dbReference type="STRING" id="66084.WRi_011130"/>
<dbReference type="KEGG" id="wri:WRi_011130"/>
<dbReference type="HOGENOM" id="CLU_045192_1_2_5"/>
<dbReference type="Proteomes" id="UP000001293">
    <property type="component" value="Chromosome"/>
</dbReference>
<dbReference type="GO" id="GO:0005737">
    <property type="term" value="C:cytoplasm"/>
    <property type="evidence" value="ECO:0007669"/>
    <property type="project" value="UniProtKB-SubCell"/>
</dbReference>
<dbReference type="GO" id="GO:0008254">
    <property type="term" value="F:3'-nucleotidase activity"/>
    <property type="evidence" value="ECO:0007669"/>
    <property type="project" value="TreeGrafter"/>
</dbReference>
<dbReference type="GO" id="GO:0008253">
    <property type="term" value="F:5'-nucleotidase activity"/>
    <property type="evidence" value="ECO:0007669"/>
    <property type="project" value="UniProtKB-UniRule"/>
</dbReference>
<dbReference type="GO" id="GO:0004309">
    <property type="term" value="F:exopolyphosphatase activity"/>
    <property type="evidence" value="ECO:0007669"/>
    <property type="project" value="TreeGrafter"/>
</dbReference>
<dbReference type="GO" id="GO:0046872">
    <property type="term" value="F:metal ion binding"/>
    <property type="evidence" value="ECO:0007669"/>
    <property type="project" value="UniProtKB-UniRule"/>
</dbReference>
<dbReference type="GO" id="GO:0000166">
    <property type="term" value="F:nucleotide binding"/>
    <property type="evidence" value="ECO:0007669"/>
    <property type="project" value="UniProtKB-KW"/>
</dbReference>
<dbReference type="Gene3D" id="3.40.1210.10">
    <property type="entry name" value="Survival protein SurE-like phosphatase/nucleotidase"/>
    <property type="match status" value="1"/>
</dbReference>
<dbReference type="HAMAP" id="MF_00060">
    <property type="entry name" value="SurE"/>
    <property type="match status" value="1"/>
</dbReference>
<dbReference type="InterPro" id="IPR030048">
    <property type="entry name" value="SurE"/>
</dbReference>
<dbReference type="InterPro" id="IPR002828">
    <property type="entry name" value="SurE-like_Pase/nucleotidase"/>
</dbReference>
<dbReference type="InterPro" id="IPR036523">
    <property type="entry name" value="SurE-like_sf"/>
</dbReference>
<dbReference type="NCBIfam" id="NF001490">
    <property type="entry name" value="PRK00346.1-4"/>
    <property type="match status" value="1"/>
</dbReference>
<dbReference type="NCBIfam" id="TIGR00087">
    <property type="entry name" value="surE"/>
    <property type="match status" value="1"/>
</dbReference>
<dbReference type="PANTHER" id="PTHR30457">
    <property type="entry name" value="5'-NUCLEOTIDASE SURE"/>
    <property type="match status" value="1"/>
</dbReference>
<dbReference type="PANTHER" id="PTHR30457:SF12">
    <property type="entry name" value="5'_3'-NUCLEOTIDASE SURE"/>
    <property type="match status" value="1"/>
</dbReference>
<dbReference type="Pfam" id="PF01975">
    <property type="entry name" value="SurE"/>
    <property type="match status" value="1"/>
</dbReference>
<dbReference type="SUPFAM" id="SSF64167">
    <property type="entry name" value="SurE-like"/>
    <property type="match status" value="1"/>
</dbReference>
<feature type="chain" id="PRO_1000196620" description="5'-nucleotidase SurE">
    <location>
        <begin position="1"/>
        <end position="250"/>
    </location>
</feature>
<feature type="binding site" evidence="1">
    <location>
        <position position="8"/>
    </location>
    <ligand>
        <name>a divalent metal cation</name>
        <dbReference type="ChEBI" id="CHEBI:60240"/>
    </ligand>
</feature>
<feature type="binding site" evidence="1">
    <location>
        <position position="9"/>
    </location>
    <ligand>
        <name>a divalent metal cation</name>
        <dbReference type="ChEBI" id="CHEBI:60240"/>
    </ligand>
</feature>
<feature type="binding site" evidence="1">
    <location>
        <position position="40"/>
    </location>
    <ligand>
        <name>a divalent metal cation</name>
        <dbReference type="ChEBI" id="CHEBI:60240"/>
    </ligand>
</feature>
<feature type="binding site" evidence="1">
    <location>
        <position position="94"/>
    </location>
    <ligand>
        <name>a divalent metal cation</name>
        <dbReference type="ChEBI" id="CHEBI:60240"/>
    </ligand>
</feature>
<reference key="1">
    <citation type="journal article" date="2009" name="Proc. Natl. Acad. Sci. U.S.A.">
        <title>The mosaic genome structure of the Wolbachia wRi strain infecting Drosophila simulans.</title>
        <authorList>
            <person name="Klasson L."/>
            <person name="Westberg J."/>
            <person name="Sapountzis P."/>
            <person name="Naeslund K."/>
            <person name="Lutnaes Y."/>
            <person name="Darby A.C."/>
            <person name="Veneti Z."/>
            <person name="Chen L."/>
            <person name="Braig H.R."/>
            <person name="Garrett R."/>
            <person name="Bourtzis K."/>
            <person name="Andersson S.G."/>
        </authorList>
    </citation>
    <scope>NUCLEOTIDE SEQUENCE [LARGE SCALE GENOMIC DNA]</scope>
    <source>
        <strain>wRi</strain>
    </source>
</reference>
<proteinExistence type="inferred from homology"/>
<protein>
    <recommendedName>
        <fullName evidence="1">5'-nucleotidase SurE</fullName>
        <ecNumber evidence="1">3.1.3.5</ecNumber>
    </recommendedName>
    <alternativeName>
        <fullName evidence="1">Nucleoside 5'-monophosphate phosphohydrolase</fullName>
    </alternativeName>
</protein>
<keyword id="KW-0963">Cytoplasm</keyword>
<keyword id="KW-0378">Hydrolase</keyword>
<keyword id="KW-0479">Metal-binding</keyword>
<keyword id="KW-0547">Nucleotide-binding</keyword>
<sequence length="250" mass="27224">MIILITNDDGFGSEGIKLLKEIARNFAPEIWIVAPDTDRSGAARSLDYPVKQSIGIKQHSEREFSVSGTPADCVIIALNKVMNKKPDLILSGVNIGSNVGDDICYSGTIGAVMEGAARSIPSIALSQVYHDKIDWHNTKVFAPKVIAKLVKVGWPKNIVMSVNFPATEKVKGVEFAEQGEYNIDGDLTFTENSNGSFSLNWSREHSGSGSINKIKEGFITITPVKLDFTDYDTLNTMKNSCADEFSSIAD</sequence>
<name>SURE_WOLWR</name>
<gene>
    <name evidence="1" type="primary">surE</name>
    <name type="ordered locus">WRi_011130</name>
</gene>
<organism>
    <name type="scientific">Wolbachia sp. subsp. Drosophila simulans (strain wRi)</name>
    <dbReference type="NCBI Taxonomy" id="66084"/>
    <lineage>
        <taxon>Bacteria</taxon>
        <taxon>Pseudomonadati</taxon>
        <taxon>Pseudomonadota</taxon>
        <taxon>Alphaproteobacteria</taxon>
        <taxon>Rickettsiales</taxon>
        <taxon>Anaplasmataceae</taxon>
        <taxon>Wolbachieae</taxon>
        <taxon>Wolbachia</taxon>
    </lineage>
</organism>
<evidence type="ECO:0000255" key="1">
    <source>
        <dbReference type="HAMAP-Rule" id="MF_00060"/>
    </source>
</evidence>
<accession>C0R4G7</accession>